<feature type="chain" id="PRO_0000094958" description="UPF0291 protein BCE33L1708">
    <location>
        <begin position="1"/>
        <end position="76"/>
    </location>
</feature>
<evidence type="ECO:0000255" key="1">
    <source>
        <dbReference type="HAMAP-Rule" id="MF_01103"/>
    </source>
</evidence>
<comment type="subcellular location">
    <subcellularLocation>
        <location evidence="1">Cytoplasm</location>
    </subcellularLocation>
</comment>
<comment type="similarity">
    <text evidence="1">Belongs to the UPF0291 family.</text>
</comment>
<protein>
    <recommendedName>
        <fullName evidence="1">UPF0291 protein BCE33L1708</fullName>
    </recommendedName>
</protein>
<sequence length="76" mass="8690">MKNILFRINELSKKEKATGLTVDEKQEQQMLRQNYTQTFRGSLDSILLNTKIVDQNGLNVTPAALQDAQIRLKLSK</sequence>
<name>Y1708_BACCZ</name>
<keyword id="KW-0963">Cytoplasm</keyword>
<proteinExistence type="inferred from homology"/>
<gene>
    <name type="ordered locus">BCE33L1708</name>
</gene>
<organism>
    <name type="scientific">Bacillus cereus (strain ZK / E33L)</name>
    <dbReference type="NCBI Taxonomy" id="288681"/>
    <lineage>
        <taxon>Bacteria</taxon>
        <taxon>Bacillati</taxon>
        <taxon>Bacillota</taxon>
        <taxon>Bacilli</taxon>
        <taxon>Bacillales</taxon>
        <taxon>Bacillaceae</taxon>
        <taxon>Bacillus</taxon>
        <taxon>Bacillus cereus group</taxon>
    </lineage>
</organism>
<accession>Q63CR4</accession>
<dbReference type="EMBL" id="CP000001">
    <property type="protein sequence ID" value="AAU18544.1"/>
    <property type="molecule type" value="Genomic_DNA"/>
</dbReference>
<dbReference type="RefSeq" id="WP_000789783.1">
    <property type="nucleotide sequence ID" value="NZ_CP009968.1"/>
</dbReference>
<dbReference type="SMR" id="Q63CR4"/>
<dbReference type="KEGG" id="bcz:BCE33L1708"/>
<dbReference type="PATRIC" id="fig|288681.22.peg.3830"/>
<dbReference type="Proteomes" id="UP000002612">
    <property type="component" value="Chromosome"/>
</dbReference>
<dbReference type="GO" id="GO:0005737">
    <property type="term" value="C:cytoplasm"/>
    <property type="evidence" value="ECO:0007669"/>
    <property type="project" value="UniProtKB-SubCell"/>
</dbReference>
<dbReference type="Gene3D" id="1.10.287.540">
    <property type="entry name" value="Helix hairpin bin"/>
    <property type="match status" value="1"/>
</dbReference>
<dbReference type="HAMAP" id="MF_01103">
    <property type="entry name" value="UPF0291"/>
    <property type="match status" value="1"/>
</dbReference>
<dbReference type="InterPro" id="IPR009242">
    <property type="entry name" value="DUF896"/>
</dbReference>
<dbReference type="NCBIfam" id="NF002452">
    <property type="entry name" value="PRK01631.1"/>
    <property type="match status" value="1"/>
</dbReference>
<dbReference type="PANTHER" id="PTHR37300:SF2">
    <property type="entry name" value="UPF0291 PROTEIN BC_1827"/>
    <property type="match status" value="1"/>
</dbReference>
<dbReference type="PANTHER" id="PTHR37300">
    <property type="entry name" value="UPF0291 PROTEIN CBO2609/CLC_2481"/>
    <property type="match status" value="1"/>
</dbReference>
<dbReference type="Pfam" id="PF05979">
    <property type="entry name" value="DUF896"/>
    <property type="match status" value="1"/>
</dbReference>
<dbReference type="SUPFAM" id="SSF158221">
    <property type="entry name" value="YnzC-like"/>
    <property type="match status" value="1"/>
</dbReference>
<reference key="1">
    <citation type="journal article" date="2006" name="J. Bacteriol.">
        <title>Pathogenomic sequence analysis of Bacillus cereus and Bacillus thuringiensis isolates closely related to Bacillus anthracis.</title>
        <authorList>
            <person name="Han C.S."/>
            <person name="Xie G."/>
            <person name="Challacombe J.F."/>
            <person name="Altherr M.R."/>
            <person name="Bhotika S.S."/>
            <person name="Bruce D."/>
            <person name="Campbell C.S."/>
            <person name="Campbell M.L."/>
            <person name="Chen J."/>
            <person name="Chertkov O."/>
            <person name="Cleland C."/>
            <person name="Dimitrijevic M."/>
            <person name="Doggett N.A."/>
            <person name="Fawcett J.J."/>
            <person name="Glavina T."/>
            <person name="Goodwin L.A."/>
            <person name="Hill K.K."/>
            <person name="Hitchcock P."/>
            <person name="Jackson P.J."/>
            <person name="Keim P."/>
            <person name="Kewalramani A.R."/>
            <person name="Longmire J."/>
            <person name="Lucas S."/>
            <person name="Malfatti S."/>
            <person name="McMurry K."/>
            <person name="Meincke L.J."/>
            <person name="Misra M."/>
            <person name="Moseman B.L."/>
            <person name="Mundt M."/>
            <person name="Munk A.C."/>
            <person name="Okinaka R.T."/>
            <person name="Parson-Quintana B."/>
            <person name="Reilly L.P."/>
            <person name="Richardson P."/>
            <person name="Robinson D.L."/>
            <person name="Rubin E."/>
            <person name="Saunders E."/>
            <person name="Tapia R."/>
            <person name="Tesmer J.G."/>
            <person name="Thayer N."/>
            <person name="Thompson L.S."/>
            <person name="Tice H."/>
            <person name="Ticknor L.O."/>
            <person name="Wills P.L."/>
            <person name="Brettin T.S."/>
            <person name="Gilna P."/>
        </authorList>
    </citation>
    <scope>NUCLEOTIDE SEQUENCE [LARGE SCALE GENOMIC DNA]</scope>
    <source>
        <strain>ZK / E33L</strain>
    </source>
</reference>